<feature type="chain" id="PRO_0000370121" description="3-deoxy-manno-octulosonate cytidylyltransferase">
    <location>
        <begin position="1"/>
        <end position="259"/>
    </location>
</feature>
<name>KDSB_PARUW</name>
<comment type="function">
    <text evidence="1">Activates KDO (a required 8-carbon sugar) for incorporation into bacterial lipopolysaccharide in Gram-negative bacteria.</text>
</comment>
<comment type="catalytic activity">
    <reaction evidence="1">
        <text>3-deoxy-alpha-D-manno-oct-2-ulosonate + CTP = CMP-3-deoxy-beta-D-manno-octulosonate + diphosphate</text>
        <dbReference type="Rhea" id="RHEA:23448"/>
        <dbReference type="ChEBI" id="CHEBI:33019"/>
        <dbReference type="ChEBI" id="CHEBI:37563"/>
        <dbReference type="ChEBI" id="CHEBI:85986"/>
        <dbReference type="ChEBI" id="CHEBI:85987"/>
        <dbReference type="EC" id="2.7.7.38"/>
    </reaction>
</comment>
<comment type="pathway">
    <text evidence="1">Nucleotide-sugar biosynthesis; CMP-3-deoxy-D-manno-octulosonate biosynthesis; CMP-3-deoxy-D-manno-octulosonate from 3-deoxy-D-manno-octulosonate and CTP: step 1/1.</text>
</comment>
<comment type="pathway">
    <text evidence="1">Bacterial outer membrane biogenesis; lipopolysaccharide biosynthesis.</text>
</comment>
<comment type="subcellular location">
    <subcellularLocation>
        <location evidence="1">Cytoplasm</location>
    </subcellularLocation>
</comment>
<comment type="similarity">
    <text evidence="1">Belongs to the KdsB family.</text>
</comment>
<dbReference type="EC" id="2.7.7.38" evidence="1"/>
<dbReference type="EMBL" id="BX908798">
    <property type="protein sequence ID" value="CAF23549.1"/>
    <property type="molecule type" value="Genomic_DNA"/>
</dbReference>
<dbReference type="SMR" id="Q6MD00"/>
<dbReference type="STRING" id="264201.pc0825"/>
<dbReference type="KEGG" id="pcu:PC_RS03970"/>
<dbReference type="eggNOG" id="COG1212">
    <property type="taxonomic scope" value="Bacteria"/>
</dbReference>
<dbReference type="HOGENOM" id="CLU_065038_0_1_0"/>
<dbReference type="OrthoDB" id="9815559at2"/>
<dbReference type="UniPathway" id="UPA00030"/>
<dbReference type="UniPathway" id="UPA00358">
    <property type="reaction ID" value="UER00476"/>
</dbReference>
<dbReference type="Proteomes" id="UP000000529">
    <property type="component" value="Chromosome"/>
</dbReference>
<dbReference type="GO" id="GO:0005829">
    <property type="term" value="C:cytosol"/>
    <property type="evidence" value="ECO:0007669"/>
    <property type="project" value="TreeGrafter"/>
</dbReference>
<dbReference type="GO" id="GO:0008690">
    <property type="term" value="F:3-deoxy-manno-octulosonate cytidylyltransferase activity"/>
    <property type="evidence" value="ECO:0007669"/>
    <property type="project" value="UniProtKB-UniRule"/>
</dbReference>
<dbReference type="GO" id="GO:0033468">
    <property type="term" value="P:CMP-keto-3-deoxy-D-manno-octulosonic acid biosynthetic process"/>
    <property type="evidence" value="ECO:0007669"/>
    <property type="project" value="UniProtKB-UniRule"/>
</dbReference>
<dbReference type="GO" id="GO:0009103">
    <property type="term" value="P:lipopolysaccharide biosynthetic process"/>
    <property type="evidence" value="ECO:0007669"/>
    <property type="project" value="UniProtKB-UniRule"/>
</dbReference>
<dbReference type="CDD" id="cd02517">
    <property type="entry name" value="CMP-KDO-Synthetase"/>
    <property type="match status" value="1"/>
</dbReference>
<dbReference type="FunFam" id="3.90.550.10:FF:000011">
    <property type="entry name" value="3-deoxy-manno-octulosonate cytidylyltransferase"/>
    <property type="match status" value="1"/>
</dbReference>
<dbReference type="Gene3D" id="3.90.550.10">
    <property type="entry name" value="Spore Coat Polysaccharide Biosynthesis Protein SpsA, Chain A"/>
    <property type="match status" value="1"/>
</dbReference>
<dbReference type="HAMAP" id="MF_00057">
    <property type="entry name" value="KdsB"/>
    <property type="match status" value="1"/>
</dbReference>
<dbReference type="InterPro" id="IPR003329">
    <property type="entry name" value="Cytidylyl_trans"/>
</dbReference>
<dbReference type="InterPro" id="IPR004528">
    <property type="entry name" value="KdsB"/>
</dbReference>
<dbReference type="InterPro" id="IPR029044">
    <property type="entry name" value="Nucleotide-diphossugar_trans"/>
</dbReference>
<dbReference type="NCBIfam" id="TIGR00466">
    <property type="entry name" value="kdsB"/>
    <property type="match status" value="1"/>
</dbReference>
<dbReference type="NCBIfam" id="NF003950">
    <property type="entry name" value="PRK05450.1-3"/>
    <property type="match status" value="1"/>
</dbReference>
<dbReference type="NCBIfam" id="NF003952">
    <property type="entry name" value="PRK05450.1-5"/>
    <property type="match status" value="1"/>
</dbReference>
<dbReference type="NCBIfam" id="NF009905">
    <property type="entry name" value="PRK13368.1"/>
    <property type="match status" value="1"/>
</dbReference>
<dbReference type="PANTHER" id="PTHR42866">
    <property type="entry name" value="3-DEOXY-MANNO-OCTULOSONATE CYTIDYLYLTRANSFERASE"/>
    <property type="match status" value="1"/>
</dbReference>
<dbReference type="PANTHER" id="PTHR42866:SF2">
    <property type="entry name" value="3-DEOXY-MANNO-OCTULOSONATE CYTIDYLYLTRANSFERASE, MITOCHONDRIAL"/>
    <property type="match status" value="1"/>
</dbReference>
<dbReference type="Pfam" id="PF02348">
    <property type="entry name" value="CTP_transf_3"/>
    <property type="match status" value="1"/>
</dbReference>
<dbReference type="SUPFAM" id="SSF53448">
    <property type="entry name" value="Nucleotide-diphospho-sugar transferases"/>
    <property type="match status" value="1"/>
</dbReference>
<keyword id="KW-0963">Cytoplasm</keyword>
<keyword id="KW-0448">Lipopolysaccharide biosynthesis</keyword>
<keyword id="KW-0548">Nucleotidyltransferase</keyword>
<keyword id="KW-1185">Reference proteome</keyword>
<keyword id="KW-0808">Transferase</keyword>
<protein>
    <recommendedName>
        <fullName evidence="1">3-deoxy-manno-octulosonate cytidylyltransferase</fullName>
        <ecNumber evidence="1">2.7.7.38</ecNumber>
    </recommendedName>
    <alternativeName>
        <fullName evidence="1">CMP-2-keto-3-deoxyoctulosonic acid synthase</fullName>
        <shortName evidence="1">CKS</shortName>
        <shortName evidence="1">CMP-KDO synthase</shortName>
    </alternativeName>
</protein>
<reference key="1">
    <citation type="journal article" date="2004" name="Science">
        <title>Illuminating the evolutionary history of chlamydiae.</title>
        <authorList>
            <person name="Horn M."/>
            <person name="Collingro A."/>
            <person name="Schmitz-Esser S."/>
            <person name="Beier C.L."/>
            <person name="Purkhold U."/>
            <person name="Fartmann B."/>
            <person name="Brandt P."/>
            <person name="Nyakatura G.J."/>
            <person name="Droege M."/>
            <person name="Frishman D."/>
            <person name="Rattei T."/>
            <person name="Mewes H.-W."/>
            <person name="Wagner M."/>
        </authorList>
    </citation>
    <scope>NUCLEOTIDE SEQUENCE [LARGE SCALE GENOMIC DNA]</scope>
    <source>
        <strain>UWE25</strain>
    </source>
</reference>
<accession>Q6MD00</accession>
<proteinExistence type="inferred from homology"/>
<evidence type="ECO:0000255" key="1">
    <source>
        <dbReference type="HAMAP-Rule" id="MF_00057"/>
    </source>
</evidence>
<organism>
    <name type="scientific">Protochlamydia amoebophila (strain UWE25)</name>
    <dbReference type="NCBI Taxonomy" id="264201"/>
    <lineage>
        <taxon>Bacteria</taxon>
        <taxon>Pseudomonadati</taxon>
        <taxon>Chlamydiota</taxon>
        <taxon>Chlamydiia</taxon>
        <taxon>Parachlamydiales</taxon>
        <taxon>Parachlamydiaceae</taxon>
        <taxon>Candidatus Protochlamydia</taxon>
    </lineage>
</organism>
<gene>
    <name evidence="1" type="primary">kdsB</name>
    <name type="ordered locus">pc0825</name>
</gene>
<sequence length="259" mass="29002">MKHAEMTGQIIGIIPARYGSTRFPGKPLASILGKTLLQRTYENSLRASALSDLIVATDDERIFEHVRSFNGKVVMTSEQCPTGTDRLAEVLSLYPEWMHATAIVNIQGDEPCLNPLTINLAVQALVNDPQGQVSTIVTPLLDEEEAKNSSIVKCVMDQQGNALYFSRALIPSNKTNSFKNGAIYFRHLGLYVYRPSFIINYQKLPSTPLQLEEDLEQLKVLEHGYRIKVAIVDQANIGVDTPEDIHKVEEWLCKQNTFL</sequence>